<gene>
    <name type="primary">Hephl1</name>
    <name type="synonym">Gm509</name>
</gene>
<name>HPHL1_MOUSE</name>
<evidence type="ECO:0000250" key="1"/>
<evidence type="ECO:0000250" key="2">
    <source>
        <dbReference type="UniProtKB" id="Q6MZM0"/>
    </source>
</evidence>
<evidence type="ECO:0000255" key="3"/>
<evidence type="ECO:0000269" key="4">
    <source>
    </source>
</evidence>
<evidence type="ECO:0000269" key="5">
    <source>
    </source>
</evidence>
<evidence type="ECO:0000305" key="6"/>
<accession>Q3V1H3</accession>
<protein>
    <recommendedName>
        <fullName evidence="2">Ferroxidase HEPHL1</fullName>
        <ecNumber evidence="2">1.16.3.1</ecNumber>
    </recommendedName>
    <alternativeName>
        <fullName evidence="2">Hephaestin-like protein 1</fullName>
    </alternativeName>
</protein>
<feature type="signal peptide" evidence="3">
    <location>
        <begin position="1"/>
        <end position="23"/>
    </location>
</feature>
<feature type="chain" id="PRO_0000346772" description="Ferroxidase HEPHL1">
    <location>
        <begin position="24"/>
        <end position="1159"/>
    </location>
</feature>
<feature type="topological domain" description="Extracellular" evidence="3">
    <location>
        <begin position="24"/>
        <end position="1114"/>
    </location>
</feature>
<feature type="transmembrane region" description="Helical" evidence="3">
    <location>
        <begin position="1115"/>
        <end position="1135"/>
    </location>
</feature>
<feature type="topological domain" description="Cytoplasmic" evidence="3">
    <location>
        <begin position="1136"/>
        <end position="1159"/>
    </location>
</feature>
<feature type="domain" description="Plastocyanin-like 1">
    <location>
        <begin position="24"/>
        <end position="206"/>
    </location>
</feature>
<feature type="domain" description="Plastocyanin-like 2">
    <location>
        <begin position="217"/>
        <end position="365"/>
    </location>
</feature>
<feature type="domain" description="Plastocyanin-like 3">
    <location>
        <begin position="378"/>
        <end position="560"/>
    </location>
</feature>
<feature type="domain" description="Plastocyanin-like 4">
    <location>
        <begin position="570"/>
        <end position="718"/>
    </location>
</feature>
<feature type="domain" description="Plastocyanin-like 5">
    <location>
        <begin position="730"/>
        <end position="906"/>
    </location>
</feature>
<feature type="domain" description="Plastocyanin-like 6">
    <location>
        <begin position="914"/>
        <end position="1092"/>
    </location>
</feature>
<feature type="binding site" description="type 2 copper site" evidence="1">
    <location>
        <position position="126"/>
    </location>
    <ligand>
        <name>Cu cation</name>
        <dbReference type="ChEBI" id="CHEBI:23378"/>
        <label>1</label>
    </ligand>
</feature>
<feature type="binding site" description="type 3 copper site" evidence="1">
    <location>
        <position position="128"/>
    </location>
    <ligand>
        <name>Cu cation</name>
        <dbReference type="ChEBI" id="CHEBI:23378"/>
        <label>2</label>
    </ligand>
</feature>
<feature type="binding site" description="type 3 copper site" evidence="1">
    <location>
        <position position="186"/>
    </location>
    <ligand>
        <name>Cu cation</name>
        <dbReference type="ChEBI" id="CHEBI:23378"/>
        <label>2</label>
    </ligand>
</feature>
<feature type="binding site" description="type 3 copper site" evidence="1">
    <location>
        <position position="188"/>
    </location>
    <ligand>
        <name>Cu cation</name>
        <dbReference type="ChEBI" id="CHEBI:23378"/>
        <label>3</label>
    </ligand>
</feature>
<feature type="binding site" description="type 1 copper site" evidence="1">
    <location>
        <position position="303"/>
    </location>
    <ligand>
        <name>Cu cation</name>
        <dbReference type="ChEBI" id="CHEBI:23378"/>
        <label>4</label>
    </ligand>
</feature>
<feature type="binding site" description="type 1 copper site" evidence="1">
    <location>
        <position position="346"/>
    </location>
    <ligand>
        <name>Cu cation</name>
        <dbReference type="ChEBI" id="CHEBI:23378"/>
        <label>4</label>
    </ligand>
</feature>
<feature type="binding site" description="type 1 copper site" evidence="1">
    <location>
        <position position="351"/>
    </location>
    <ligand>
        <name>Cu cation</name>
        <dbReference type="ChEBI" id="CHEBI:23378"/>
        <label>4</label>
    </ligand>
</feature>
<feature type="binding site" description="type 1 copper site" evidence="1">
    <location>
        <position position="656"/>
    </location>
    <ligand>
        <name>Cu cation</name>
        <dbReference type="ChEBI" id="CHEBI:23378"/>
        <label>5</label>
    </ligand>
</feature>
<feature type="binding site" description="type 1 copper site" evidence="1">
    <location>
        <position position="699"/>
    </location>
    <ligand>
        <name>Cu cation</name>
        <dbReference type="ChEBI" id="CHEBI:23378"/>
        <label>5</label>
    </ligand>
</feature>
<feature type="binding site" description="type 1 copper site" evidence="1">
    <location>
        <position position="704"/>
    </location>
    <ligand>
        <name>Cu cation</name>
        <dbReference type="ChEBI" id="CHEBI:23378"/>
        <label>5</label>
    </ligand>
</feature>
<feature type="binding site" description="type 1 copper site" evidence="1">
    <location>
        <position position="709"/>
    </location>
    <ligand>
        <name>Cu cation</name>
        <dbReference type="ChEBI" id="CHEBI:23378"/>
        <label>5</label>
    </ligand>
</feature>
<feature type="binding site" description="type 1 copper site" evidence="1">
    <location>
        <position position="1002"/>
    </location>
    <ligand>
        <name>Cu cation</name>
        <dbReference type="ChEBI" id="CHEBI:23378"/>
        <label>6</label>
    </ligand>
</feature>
<feature type="binding site" description="type 2 copper site" evidence="1">
    <location>
        <position position="1005"/>
    </location>
    <ligand>
        <name>Cu cation</name>
        <dbReference type="ChEBI" id="CHEBI:23378"/>
        <label>1</label>
    </ligand>
</feature>
<feature type="binding site" description="type 3 copper site" evidence="1">
    <location>
        <position position="1007"/>
    </location>
    <ligand>
        <name>Cu cation</name>
        <dbReference type="ChEBI" id="CHEBI:23378"/>
        <label>3</label>
    </ligand>
</feature>
<feature type="binding site" description="type 3 copper site" evidence="1">
    <location>
        <position position="1047"/>
    </location>
    <ligand>
        <name>Cu cation</name>
        <dbReference type="ChEBI" id="CHEBI:23378"/>
        <label>3</label>
    </ligand>
</feature>
<feature type="binding site" description="type 1 copper site" evidence="1">
    <location>
        <position position="1048"/>
    </location>
    <ligand>
        <name>Cu cation</name>
        <dbReference type="ChEBI" id="CHEBI:23378"/>
        <label>6</label>
    </ligand>
</feature>
<feature type="binding site" description="type 3 copper site" evidence="1">
    <location>
        <position position="1049"/>
    </location>
    <ligand>
        <name>Cu cation</name>
        <dbReference type="ChEBI" id="CHEBI:23378"/>
        <label>2</label>
    </ligand>
</feature>
<feature type="binding site" description="type 1 copper site" evidence="1">
    <location>
        <position position="1053"/>
    </location>
    <ligand>
        <name>Cu cation</name>
        <dbReference type="ChEBI" id="CHEBI:23378"/>
        <label>6</label>
    </ligand>
</feature>
<feature type="binding site" description="type 1 copper site" evidence="1">
    <location>
        <position position="1058"/>
    </location>
    <ligand>
        <name>Cu cation</name>
        <dbReference type="ChEBI" id="CHEBI:23378"/>
        <label>6</label>
    </ligand>
</feature>
<feature type="glycosylation site" description="N-linked (GlcNAc...) asparagine" evidence="2">
    <location>
        <position position="160"/>
    </location>
</feature>
<feature type="glycosylation site" description="N-linked (GlcNAc...) asparagine" evidence="3">
    <location>
        <position position="235"/>
    </location>
</feature>
<feature type="glycosylation site" description="N-linked (GlcNAc...) asparagine" evidence="2">
    <location>
        <position position="406"/>
    </location>
</feature>
<feature type="glycosylation site" description="N-linked (GlcNAc...) asparagine" evidence="3">
    <location>
        <position position="588"/>
    </location>
</feature>
<feature type="glycosylation site" description="N-linked (GlcNAc...) asparagine" evidence="2">
    <location>
        <position position="771"/>
    </location>
</feature>
<feature type="glycosylation site" description="N-linked (GlcNAc...) asparagine" evidence="3">
    <location>
        <position position="934"/>
    </location>
</feature>
<feature type="disulfide bond" evidence="3">
    <location>
        <begin position="180"/>
        <end position="206"/>
    </location>
</feature>
<feature type="disulfide bond" evidence="3">
    <location>
        <begin position="284"/>
        <end position="365"/>
    </location>
</feature>
<feature type="disulfide bond" evidence="3">
    <location>
        <begin position="534"/>
        <end position="560"/>
    </location>
</feature>
<feature type="disulfide bond" evidence="3">
    <location>
        <begin position="637"/>
        <end position="718"/>
    </location>
</feature>
<feature type="disulfide bond" evidence="3">
    <location>
        <begin position="880"/>
        <end position="906"/>
    </location>
</feature>
<dbReference type="EC" id="1.16.3.1" evidence="2"/>
<dbReference type="EMBL" id="AK132457">
    <property type="protein sequence ID" value="BAE21178.1"/>
    <property type="status" value="ALT_INIT"/>
    <property type="molecule type" value="mRNA"/>
</dbReference>
<dbReference type="EMBL" id="AC154295">
    <property type="status" value="NOT_ANNOTATED_CDS"/>
    <property type="molecule type" value="Genomic_DNA"/>
</dbReference>
<dbReference type="EMBL" id="AC156500">
    <property type="status" value="NOT_ANNOTATED_CDS"/>
    <property type="molecule type" value="Genomic_DNA"/>
</dbReference>
<dbReference type="CCDS" id="CCDS52725.1"/>
<dbReference type="RefSeq" id="NP_001158269.1">
    <property type="nucleotide sequence ID" value="NM_001164797.1"/>
</dbReference>
<dbReference type="SMR" id="Q3V1H3"/>
<dbReference type="BioGRID" id="232682">
    <property type="interactions" value="1"/>
</dbReference>
<dbReference type="FunCoup" id="Q3V1H3">
    <property type="interactions" value="827"/>
</dbReference>
<dbReference type="STRING" id="10090.ENSMUSP00000124518"/>
<dbReference type="GlyCosmos" id="Q3V1H3">
    <property type="glycosylation" value="6 sites, No reported glycans"/>
</dbReference>
<dbReference type="GlyGen" id="Q3V1H3">
    <property type="glycosylation" value="6 sites"/>
</dbReference>
<dbReference type="PhosphoSitePlus" id="Q3V1H3"/>
<dbReference type="PaxDb" id="10090-ENSMUSP00000124518"/>
<dbReference type="ProteomicsDB" id="273166"/>
<dbReference type="Antibodypedia" id="31604">
    <property type="antibodies" value="58 antibodies from 12 providers"/>
</dbReference>
<dbReference type="Ensembl" id="ENSMUST00000159985.2">
    <property type="protein sequence ID" value="ENSMUSP00000124518.2"/>
    <property type="gene ID" value="ENSMUSG00000031936.10"/>
</dbReference>
<dbReference type="GeneID" id="244698"/>
<dbReference type="KEGG" id="mmu:244698"/>
<dbReference type="UCSC" id="uc009ofj.2">
    <property type="organism name" value="mouse"/>
</dbReference>
<dbReference type="AGR" id="MGI:2685355"/>
<dbReference type="CTD" id="341208"/>
<dbReference type="MGI" id="MGI:2685355">
    <property type="gene designation" value="Hephl1"/>
</dbReference>
<dbReference type="VEuPathDB" id="HostDB:ENSMUSG00000031936"/>
<dbReference type="eggNOG" id="KOG1263">
    <property type="taxonomic scope" value="Eukaryota"/>
</dbReference>
<dbReference type="GeneTree" id="ENSGT00940000157994"/>
<dbReference type="HOGENOM" id="CLU_005569_0_0_1"/>
<dbReference type="InParanoid" id="Q3V1H3"/>
<dbReference type="OMA" id="PEPDMCV"/>
<dbReference type="OrthoDB" id="2121828at2759"/>
<dbReference type="PhylomeDB" id="Q3V1H3"/>
<dbReference type="TreeFam" id="TF329807"/>
<dbReference type="BioGRID-ORCS" id="244698">
    <property type="hits" value="4 hits in 79 CRISPR screens"/>
</dbReference>
<dbReference type="PRO" id="PR:Q3V1H3"/>
<dbReference type="Proteomes" id="UP000000589">
    <property type="component" value="Chromosome 9"/>
</dbReference>
<dbReference type="RNAct" id="Q3V1H3">
    <property type="molecule type" value="protein"/>
</dbReference>
<dbReference type="Bgee" id="ENSMUSG00000031936">
    <property type="expression patterns" value="Expressed in skin of abdomen and 29 other cell types or tissues"/>
</dbReference>
<dbReference type="GO" id="GO:0016020">
    <property type="term" value="C:membrane"/>
    <property type="evidence" value="ECO:0007669"/>
    <property type="project" value="UniProtKB-SubCell"/>
</dbReference>
<dbReference type="GO" id="GO:0005507">
    <property type="term" value="F:copper ion binding"/>
    <property type="evidence" value="ECO:0007669"/>
    <property type="project" value="InterPro"/>
</dbReference>
<dbReference type="GO" id="GO:0004322">
    <property type="term" value="F:ferroxidase activity"/>
    <property type="evidence" value="ECO:0000250"/>
    <property type="project" value="UniProtKB"/>
</dbReference>
<dbReference type="GO" id="GO:0006825">
    <property type="term" value="P:copper ion transport"/>
    <property type="evidence" value="ECO:0007669"/>
    <property type="project" value="UniProtKB-KW"/>
</dbReference>
<dbReference type="GO" id="GO:0006879">
    <property type="term" value="P:intracellular iron ion homeostasis"/>
    <property type="evidence" value="ECO:0000250"/>
    <property type="project" value="UniProtKB"/>
</dbReference>
<dbReference type="GO" id="GO:0060586">
    <property type="term" value="P:multicellular organismal-level iron ion homeostasis"/>
    <property type="evidence" value="ECO:0000266"/>
    <property type="project" value="MGI"/>
</dbReference>
<dbReference type="CDD" id="cd04222">
    <property type="entry name" value="CuRO_1_ceruloplasmin"/>
    <property type="match status" value="1"/>
</dbReference>
<dbReference type="CDD" id="cd04224">
    <property type="entry name" value="CuRO_3_ceruloplasmin"/>
    <property type="match status" value="1"/>
</dbReference>
<dbReference type="CDD" id="cd11022">
    <property type="entry name" value="CuRO_4_ceruloplasmin"/>
    <property type="match status" value="1"/>
</dbReference>
<dbReference type="FunFam" id="2.60.40.420:FF:000002">
    <property type="entry name" value="Hephaestin like 1"/>
    <property type="match status" value="3"/>
</dbReference>
<dbReference type="Gene3D" id="2.60.40.420">
    <property type="entry name" value="Cupredoxins - blue copper proteins"/>
    <property type="match status" value="3"/>
</dbReference>
<dbReference type="InterPro" id="IPR011707">
    <property type="entry name" value="Cu-oxidase-like_N"/>
</dbReference>
<dbReference type="InterPro" id="IPR011706">
    <property type="entry name" value="Cu-oxidase_C"/>
</dbReference>
<dbReference type="InterPro" id="IPR045087">
    <property type="entry name" value="Cu-oxidase_fam"/>
</dbReference>
<dbReference type="InterPro" id="IPR033138">
    <property type="entry name" value="Cu_oxidase_CS"/>
</dbReference>
<dbReference type="InterPro" id="IPR002355">
    <property type="entry name" value="Cu_oxidase_Cu_BS"/>
</dbReference>
<dbReference type="InterPro" id="IPR008972">
    <property type="entry name" value="Cupredoxin"/>
</dbReference>
<dbReference type="PANTHER" id="PTHR11709:SF233">
    <property type="entry name" value="FERROXIDASE HEPHL1"/>
    <property type="match status" value="1"/>
</dbReference>
<dbReference type="PANTHER" id="PTHR11709">
    <property type="entry name" value="MULTI-COPPER OXIDASE"/>
    <property type="match status" value="1"/>
</dbReference>
<dbReference type="Pfam" id="PF07731">
    <property type="entry name" value="Cu-oxidase_2"/>
    <property type="match status" value="2"/>
</dbReference>
<dbReference type="Pfam" id="PF07732">
    <property type="entry name" value="Cu-oxidase_3"/>
    <property type="match status" value="3"/>
</dbReference>
<dbReference type="SUPFAM" id="SSF49503">
    <property type="entry name" value="Cupredoxins"/>
    <property type="match status" value="6"/>
</dbReference>
<dbReference type="PROSITE" id="PS00079">
    <property type="entry name" value="MULTICOPPER_OXIDASE1"/>
    <property type="match status" value="3"/>
</dbReference>
<dbReference type="PROSITE" id="PS00080">
    <property type="entry name" value="MULTICOPPER_OXIDASE2"/>
    <property type="match status" value="1"/>
</dbReference>
<comment type="function">
    <text evidence="2">Is a copper-binding glycoprotein with ferroxidase activity. It oxidizes Fe(2+) to Fe(3+) without releasing radical oxygen species. May be involved in the regulation of intracellular iron content.</text>
</comment>
<comment type="catalytic activity">
    <reaction evidence="2">
        <text>4 Fe(2+) + O2 + 4 H(+) = 4 Fe(3+) + 2 H2O</text>
        <dbReference type="Rhea" id="RHEA:11148"/>
        <dbReference type="ChEBI" id="CHEBI:15377"/>
        <dbReference type="ChEBI" id="CHEBI:15378"/>
        <dbReference type="ChEBI" id="CHEBI:15379"/>
        <dbReference type="ChEBI" id="CHEBI:29033"/>
        <dbReference type="ChEBI" id="CHEBI:29034"/>
        <dbReference type="EC" id="1.16.3.1"/>
    </reaction>
</comment>
<comment type="cofactor">
    <cofactor evidence="2">
        <name>Cu cation</name>
        <dbReference type="ChEBI" id="CHEBI:23378"/>
    </cofactor>
    <text evidence="1">Binds 6 Cu cations per monomer.</text>
</comment>
<comment type="subcellular location">
    <subcellularLocation>
        <location evidence="6">Membrane</location>
        <topology evidence="6">Single-pass type I membrane protein</topology>
    </subcellularLocation>
</comment>
<comment type="disease">
    <text evidence="5">Defects in HEPHL1 are the cause of the curly whiskers phenotype (cw). Curly whiskers mice carry a recessive mutation that alters splicing and causes omission of exon 11 from the mature transcript. The cw phenotype is characterized by kinky, brittle vibrissae.</text>
</comment>
<comment type="disruption phenotype">
    <text evidence="4">HEPHL1 knockdown mice exhibit short and curled whiskers.</text>
</comment>
<comment type="similarity">
    <text evidence="6">Belongs to the multicopper oxidase family.</text>
</comment>
<comment type="sequence caution" evidence="6">
    <conflict type="erroneous initiation">
        <sequence resource="EMBL-CDS" id="BAE21178"/>
    </conflict>
</comment>
<proteinExistence type="evidence at transcript level"/>
<keyword id="KW-0186">Copper</keyword>
<keyword id="KW-0187">Copper transport</keyword>
<keyword id="KW-1015">Disulfide bond</keyword>
<keyword id="KW-0325">Glycoprotein</keyword>
<keyword id="KW-0406">Ion transport</keyword>
<keyword id="KW-0472">Membrane</keyword>
<keyword id="KW-0479">Metal-binding</keyword>
<keyword id="KW-0560">Oxidoreductase</keyword>
<keyword id="KW-1185">Reference proteome</keyword>
<keyword id="KW-0677">Repeat</keyword>
<keyword id="KW-0732">Signal</keyword>
<keyword id="KW-0812">Transmembrane</keyword>
<keyword id="KW-1133">Transmembrane helix</keyword>
<keyword id="KW-0813">Transport</keyword>
<sequence length="1159" mass="130888">MFLKQPGGCILLQFLGLLGLVGAVTRTYYIGIVEEYWNYVPQGKDVITGKSFSEDKLATLFLERGPNRIGGIYKKAVYRHFTDGSYSTEIPKPPWLGFLGPILRAEVGDVIVIHLMNFASRPFSLHPHGVFYDKDSEGALYPDGTSGRNKEDDMVPPGKNYTYVWPVREEYAPAPADANCLTWVYHSHIDAPKDICSGLIGPLLVCKEGVLNRYSGMRTDVDREFVIMFTLVDENQSWYLDDNIKQFCTNPNSVDKSDAVFQRSNKMHALNGFLFGNMPEPEMCVGESVSWHLFGMGNEIDIHSIYFYGNTFITRGHRADVVNLFPATFLTTEMIVENPGKWMITCQVSDHLQAGMLGQYSVGNCRGNAPHPKVQGQQRRYFIAAEKVLWDYGPQGYDKFTGFPLNTSGSDSAVYFTQADNRIGGKYWKARYTEYVDATFSRRKMPSDSEAHLGILGPVIKAEVGDILLVTFANKADKVYSILPHGVFYDKASDAAPNVDGFLKPGAHVKPGETFTYRWTVPESVSPTDEDPPCLTYLYFSAVQPIKDTSAGLVGPLLVCKKGTLNADGTQKGIDKEFYLLFTVFDENFSSYLDENIKKFTWHPFSVDKEDKEFVKSNRMHAVNGYMYGSQPGLSMCKKDRVSWHLIGMGTDTDMHGVYFQGNTIHLRGTHRDSLALFPHMATTAYMQPDHSGIFKVFCSTLPHFTRGMGQIYEISSCGNRDPSEPPYGMLRTFFIAAEEVEWDYAPNKNWEFEKQHLDAGGERHGDIFMNHTENWIGSQYRKVVYREYTNGEFVEIKARPPQEEHLQLLGPMIHAEVGDSILIIFKNKASRPYSIAAQGVEDSNNGKLLNVPVTKPGEIKTYRWNVPKRSGPGPSDPNCIPWVYFSTANFVKDTYSGLMGPLITCREGVLNEKGRRSDVDYEFALLFLVFNENESWYLDDNIKKYLNKDPRDFKHTDDFEESNKMHAINGKIFGNLPGLIMTEDSMTNWYLLGIGSEVDIHTIHYHAESFLFKIDKSYREDVYDLFPGTFQTIELFADHPGTWLLHCHVSDHIHAGMETTYTVLRNIDNRIPYSTKTPSGAGSHAVTVPSQEQPGKEELYFFGKNLRPRGAKAALVILFILGLLLLVATVVLALRLRSSRRQMAYREVQSCALPTDAL</sequence>
<organism>
    <name type="scientific">Mus musculus</name>
    <name type="common">Mouse</name>
    <dbReference type="NCBI Taxonomy" id="10090"/>
    <lineage>
        <taxon>Eukaryota</taxon>
        <taxon>Metazoa</taxon>
        <taxon>Chordata</taxon>
        <taxon>Craniata</taxon>
        <taxon>Vertebrata</taxon>
        <taxon>Euteleostomi</taxon>
        <taxon>Mammalia</taxon>
        <taxon>Eutheria</taxon>
        <taxon>Euarchontoglires</taxon>
        <taxon>Glires</taxon>
        <taxon>Rodentia</taxon>
        <taxon>Myomorpha</taxon>
        <taxon>Muroidea</taxon>
        <taxon>Muridae</taxon>
        <taxon>Murinae</taxon>
        <taxon>Mus</taxon>
        <taxon>Mus</taxon>
    </lineage>
</organism>
<reference key="1">
    <citation type="journal article" date="2005" name="Science">
        <title>The transcriptional landscape of the mammalian genome.</title>
        <authorList>
            <person name="Carninci P."/>
            <person name="Kasukawa T."/>
            <person name="Katayama S."/>
            <person name="Gough J."/>
            <person name="Frith M.C."/>
            <person name="Maeda N."/>
            <person name="Oyama R."/>
            <person name="Ravasi T."/>
            <person name="Lenhard B."/>
            <person name="Wells C."/>
            <person name="Kodzius R."/>
            <person name="Shimokawa K."/>
            <person name="Bajic V.B."/>
            <person name="Brenner S.E."/>
            <person name="Batalov S."/>
            <person name="Forrest A.R."/>
            <person name="Zavolan M."/>
            <person name="Davis M.J."/>
            <person name="Wilming L.G."/>
            <person name="Aidinis V."/>
            <person name="Allen J.E."/>
            <person name="Ambesi-Impiombato A."/>
            <person name="Apweiler R."/>
            <person name="Aturaliya R.N."/>
            <person name="Bailey T.L."/>
            <person name="Bansal M."/>
            <person name="Baxter L."/>
            <person name="Beisel K.W."/>
            <person name="Bersano T."/>
            <person name="Bono H."/>
            <person name="Chalk A.M."/>
            <person name="Chiu K.P."/>
            <person name="Choudhary V."/>
            <person name="Christoffels A."/>
            <person name="Clutterbuck D.R."/>
            <person name="Crowe M.L."/>
            <person name="Dalla E."/>
            <person name="Dalrymple B.P."/>
            <person name="de Bono B."/>
            <person name="Della Gatta G."/>
            <person name="di Bernardo D."/>
            <person name="Down T."/>
            <person name="Engstrom P."/>
            <person name="Fagiolini M."/>
            <person name="Faulkner G."/>
            <person name="Fletcher C.F."/>
            <person name="Fukushima T."/>
            <person name="Furuno M."/>
            <person name="Futaki S."/>
            <person name="Gariboldi M."/>
            <person name="Georgii-Hemming P."/>
            <person name="Gingeras T.R."/>
            <person name="Gojobori T."/>
            <person name="Green R.E."/>
            <person name="Gustincich S."/>
            <person name="Harbers M."/>
            <person name="Hayashi Y."/>
            <person name="Hensch T.K."/>
            <person name="Hirokawa N."/>
            <person name="Hill D."/>
            <person name="Huminiecki L."/>
            <person name="Iacono M."/>
            <person name="Ikeo K."/>
            <person name="Iwama A."/>
            <person name="Ishikawa T."/>
            <person name="Jakt M."/>
            <person name="Kanapin A."/>
            <person name="Katoh M."/>
            <person name="Kawasawa Y."/>
            <person name="Kelso J."/>
            <person name="Kitamura H."/>
            <person name="Kitano H."/>
            <person name="Kollias G."/>
            <person name="Krishnan S.P."/>
            <person name="Kruger A."/>
            <person name="Kummerfeld S.K."/>
            <person name="Kurochkin I.V."/>
            <person name="Lareau L.F."/>
            <person name="Lazarevic D."/>
            <person name="Lipovich L."/>
            <person name="Liu J."/>
            <person name="Liuni S."/>
            <person name="McWilliam S."/>
            <person name="Madan Babu M."/>
            <person name="Madera M."/>
            <person name="Marchionni L."/>
            <person name="Matsuda H."/>
            <person name="Matsuzawa S."/>
            <person name="Miki H."/>
            <person name="Mignone F."/>
            <person name="Miyake S."/>
            <person name="Morris K."/>
            <person name="Mottagui-Tabar S."/>
            <person name="Mulder N."/>
            <person name="Nakano N."/>
            <person name="Nakauchi H."/>
            <person name="Ng P."/>
            <person name="Nilsson R."/>
            <person name="Nishiguchi S."/>
            <person name="Nishikawa S."/>
            <person name="Nori F."/>
            <person name="Ohara O."/>
            <person name="Okazaki Y."/>
            <person name="Orlando V."/>
            <person name="Pang K.C."/>
            <person name="Pavan W.J."/>
            <person name="Pavesi G."/>
            <person name="Pesole G."/>
            <person name="Petrovsky N."/>
            <person name="Piazza S."/>
            <person name="Reed J."/>
            <person name="Reid J.F."/>
            <person name="Ring B.Z."/>
            <person name="Ringwald M."/>
            <person name="Rost B."/>
            <person name="Ruan Y."/>
            <person name="Salzberg S.L."/>
            <person name="Sandelin A."/>
            <person name="Schneider C."/>
            <person name="Schoenbach C."/>
            <person name="Sekiguchi K."/>
            <person name="Semple C.A."/>
            <person name="Seno S."/>
            <person name="Sessa L."/>
            <person name="Sheng Y."/>
            <person name="Shibata Y."/>
            <person name="Shimada H."/>
            <person name="Shimada K."/>
            <person name="Silva D."/>
            <person name="Sinclair B."/>
            <person name="Sperling S."/>
            <person name="Stupka E."/>
            <person name="Sugiura K."/>
            <person name="Sultana R."/>
            <person name="Takenaka Y."/>
            <person name="Taki K."/>
            <person name="Tammoja K."/>
            <person name="Tan S.L."/>
            <person name="Tang S."/>
            <person name="Taylor M.S."/>
            <person name="Tegner J."/>
            <person name="Teichmann S.A."/>
            <person name="Ueda H.R."/>
            <person name="van Nimwegen E."/>
            <person name="Verardo R."/>
            <person name="Wei C.L."/>
            <person name="Yagi K."/>
            <person name="Yamanishi H."/>
            <person name="Zabarovsky E."/>
            <person name="Zhu S."/>
            <person name="Zimmer A."/>
            <person name="Hide W."/>
            <person name="Bult C."/>
            <person name="Grimmond S.M."/>
            <person name="Teasdale R.D."/>
            <person name="Liu E.T."/>
            <person name="Brusic V."/>
            <person name="Quackenbush J."/>
            <person name="Wahlestedt C."/>
            <person name="Mattick J.S."/>
            <person name="Hume D.A."/>
            <person name="Kai C."/>
            <person name="Sasaki D."/>
            <person name="Tomaru Y."/>
            <person name="Fukuda S."/>
            <person name="Kanamori-Katayama M."/>
            <person name="Suzuki M."/>
            <person name="Aoki J."/>
            <person name="Arakawa T."/>
            <person name="Iida J."/>
            <person name="Imamura K."/>
            <person name="Itoh M."/>
            <person name="Kato T."/>
            <person name="Kawaji H."/>
            <person name="Kawagashira N."/>
            <person name="Kawashima T."/>
            <person name="Kojima M."/>
            <person name="Kondo S."/>
            <person name="Konno H."/>
            <person name="Nakano K."/>
            <person name="Ninomiya N."/>
            <person name="Nishio T."/>
            <person name="Okada M."/>
            <person name="Plessy C."/>
            <person name="Shibata K."/>
            <person name="Shiraki T."/>
            <person name="Suzuki S."/>
            <person name="Tagami M."/>
            <person name="Waki K."/>
            <person name="Watahiki A."/>
            <person name="Okamura-Oho Y."/>
            <person name="Suzuki H."/>
            <person name="Kawai J."/>
            <person name="Hayashizaki Y."/>
        </authorList>
    </citation>
    <scope>NUCLEOTIDE SEQUENCE [LARGE SCALE MRNA]</scope>
    <source>
        <strain>C57BL/6J</strain>
        <tissue>Skin</tissue>
    </source>
</reference>
<reference key="2">
    <citation type="journal article" date="2009" name="PLoS Biol.">
        <title>Lineage-specific biology revealed by a finished genome assembly of the mouse.</title>
        <authorList>
            <person name="Church D.M."/>
            <person name="Goodstadt L."/>
            <person name="Hillier L.W."/>
            <person name="Zody M.C."/>
            <person name="Goldstein S."/>
            <person name="She X."/>
            <person name="Bult C.J."/>
            <person name="Agarwala R."/>
            <person name="Cherry J.L."/>
            <person name="DiCuccio M."/>
            <person name="Hlavina W."/>
            <person name="Kapustin Y."/>
            <person name="Meric P."/>
            <person name="Maglott D."/>
            <person name="Birtle Z."/>
            <person name="Marques A.C."/>
            <person name="Graves T."/>
            <person name="Zhou S."/>
            <person name="Teague B."/>
            <person name="Potamousis K."/>
            <person name="Churas C."/>
            <person name="Place M."/>
            <person name="Herschleb J."/>
            <person name="Runnheim R."/>
            <person name="Forrest D."/>
            <person name="Amos-Landgraf J."/>
            <person name="Schwartz D.C."/>
            <person name="Cheng Z."/>
            <person name="Lindblad-Toh K."/>
            <person name="Eichler E.E."/>
            <person name="Ponting C.P."/>
        </authorList>
    </citation>
    <scope>NUCLEOTIDE SEQUENCE [LARGE SCALE GENOMIC DNA]</scope>
    <source>
        <strain>C57BL/6J</strain>
    </source>
</reference>
<reference key="3">
    <citation type="journal article" date="2019" name="Mol. Genet. Metab. Rep.">
        <title>The mouse curly whiskers (cw) mutations are recessive alleles of hephaestin-like 1 (Hephl1).</title>
        <authorList>
            <person name="Eragene S."/>
            <person name="Stewart J.J."/>
            <person name="Samuel-Constanzo J.I."/>
            <person name="Tan T."/>
            <person name="Esgdaille N.Z."/>
            <person name="Bigiarelli K.J."/>
            <person name="DaCosta V.D."/>
            <person name="Jimenez H."/>
            <person name="King T.R."/>
        </authorList>
    </citation>
    <scope>INVOLVEMENT IN CURLY WHISKERS PHENOTYPE</scope>
</reference>
<reference key="4">
    <citation type="journal article" date="2019" name="PLoS Genet.">
        <title>Biallelic HEPHL1 variants impair ferroxidase activity and cause an abnormal hair phenotype.</title>
        <authorList>
            <person name="Sharma P."/>
            <person name="Reichert M."/>
            <person name="Lu Y."/>
            <person name="Markello T.C."/>
            <person name="Adams D.R."/>
            <person name="Steinbach P.J."/>
            <person name="Fuqua B.K."/>
            <person name="Parisi X."/>
            <person name="Kaler S.G."/>
            <person name="Vulpe C.D."/>
            <person name="Anderson G.J."/>
            <person name="Gahl W.A."/>
            <person name="Malicdan M.C.V."/>
        </authorList>
    </citation>
    <scope>DISRUPTION PHENOTYPE</scope>
</reference>